<evidence type="ECO:0000250" key="1"/>
<evidence type="ECO:0000256" key="2">
    <source>
        <dbReference type="SAM" id="MobiDB-lite"/>
    </source>
</evidence>
<evidence type="ECO:0000305" key="3"/>
<accession>P81202</accession>
<comment type="function">
    <text>Core component of nucleosome. Nucleosomes wrap and compact DNA into chromatin, limiting DNA accessibility to the cellular machineries which require DNA as a template. Histones thereby play a central role in transcription regulation, DNA repair, DNA replication and chromosomal stability. DNA accessibility is regulated via a complex set of post-translational modifications of histones, also called histone code, and nucleosome remodeling.</text>
</comment>
<comment type="subunit">
    <text>The nucleosome is a histone octamer containing two molecules each of H2A, H2B, H3 and H4 assembled in one H3-H4 heterotetramer and two H2A-H2B heterodimers. The octamer wraps approximately 147 bp of DNA.</text>
</comment>
<comment type="subcellular location">
    <subcellularLocation>
        <location evidence="1">Nucleus</location>
    </subcellularLocation>
    <subcellularLocation>
        <location evidence="1">Chromosome</location>
    </subcellularLocation>
</comment>
<comment type="similarity">
    <text evidence="3">Belongs to the histone H3 family.</text>
</comment>
<sequence>NTGAKAPRKHLANKAARKTAAPANAGIKKPHRYRPGTVALREIRKYQKSTDLLIRKLPFQRLVREIASEYKNDLRFQSSAVLALQEAAEAYMIGLFEDTNLCAIHGKRVTIMP</sequence>
<keyword id="KW-0158">Chromosome</keyword>
<keyword id="KW-0238">DNA-binding</keyword>
<keyword id="KW-0544">Nucleosome core</keyword>
<keyword id="KW-0539">Nucleus</keyword>
<organism>
    <name type="scientific">Stylonychia lemnae</name>
    <name type="common">Ciliate</name>
    <dbReference type="NCBI Taxonomy" id="5949"/>
    <lineage>
        <taxon>Eukaryota</taxon>
        <taxon>Sar</taxon>
        <taxon>Alveolata</taxon>
        <taxon>Ciliophora</taxon>
        <taxon>Intramacronucleata</taxon>
        <taxon>Spirotrichea</taxon>
        <taxon>Stichotrichia</taxon>
        <taxon>Sporadotrichida</taxon>
        <taxon>Oxytrichidae</taxon>
        <taxon>Stylonychinae</taxon>
        <taxon>Stylonychia</taxon>
    </lineage>
</organism>
<name>H38_STYLE</name>
<feature type="chain" id="PRO_0000221328" description="Histone H3-8">
    <location>
        <begin position="1" status="less than"/>
        <end position="113" status="greater than"/>
    </location>
</feature>
<feature type="region of interest" description="Disordered" evidence="2">
    <location>
        <begin position="1"/>
        <end position="31"/>
    </location>
</feature>
<feature type="compositionally biased region" description="Basic residues" evidence="2">
    <location>
        <begin position="1"/>
        <end position="17"/>
    </location>
</feature>
<feature type="non-terminal residue">
    <location>
        <position position="1"/>
    </location>
</feature>
<feature type="non-terminal residue">
    <location>
        <position position="113"/>
    </location>
</feature>
<gene>
    <name type="primary">H3-8</name>
</gene>
<protein>
    <recommendedName>
        <fullName>Histone H3-8</fullName>
    </recommendedName>
</protein>
<dbReference type="EMBL" id="Y16634">
    <property type="protein sequence ID" value="CAA76337.1"/>
    <property type="molecule type" value="Genomic_DNA"/>
</dbReference>
<dbReference type="SMR" id="P81202"/>
<dbReference type="GO" id="GO:0000786">
    <property type="term" value="C:nucleosome"/>
    <property type="evidence" value="ECO:0007669"/>
    <property type="project" value="UniProtKB-KW"/>
</dbReference>
<dbReference type="GO" id="GO:0005634">
    <property type="term" value="C:nucleus"/>
    <property type="evidence" value="ECO:0007669"/>
    <property type="project" value="UniProtKB-SubCell"/>
</dbReference>
<dbReference type="GO" id="GO:0003677">
    <property type="term" value="F:DNA binding"/>
    <property type="evidence" value="ECO:0007669"/>
    <property type="project" value="UniProtKB-KW"/>
</dbReference>
<dbReference type="GO" id="GO:0046982">
    <property type="term" value="F:protein heterodimerization activity"/>
    <property type="evidence" value="ECO:0007669"/>
    <property type="project" value="InterPro"/>
</dbReference>
<dbReference type="GO" id="GO:0030527">
    <property type="term" value="F:structural constituent of chromatin"/>
    <property type="evidence" value="ECO:0007669"/>
    <property type="project" value="InterPro"/>
</dbReference>
<dbReference type="CDD" id="cd22911">
    <property type="entry name" value="HFD_H3"/>
    <property type="match status" value="1"/>
</dbReference>
<dbReference type="FunFam" id="1.10.20.10:FF:000001">
    <property type="entry name" value="Histone H3"/>
    <property type="match status" value="1"/>
</dbReference>
<dbReference type="Gene3D" id="1.10.20.10">
    <property type="entry name" value="Histone, subunit A"/>
    <property type="match status" value="1"/>
</dbReference>
<dbReference type="InterPro" id="IPR009072">
    <property type="entry name" value="Histone-fold"/>
</dbReference>
<dbReference type="InterPro" id="IPR007125">
    <property type="entry name" value="Histone_H2A/H2B/H3"/>
</dbReference>
<dbReference type="InterPro" id="IPR000164">
    <property type="entry name" value="Histone_H3/CENP-A"/>
</dbReference>
<dbReference type="PANTHER" id="PTHR11426">
    <property type="entry name" value="HISTONE H3"/>
    <property type="match status" value="1"/>
</dbReference>
<dbReference type="Pfam" id="PF00125">
    <property type="entry name" value="Histone"/>
    <property type="match status" value="1"/>
</dbReference>
<dbReference type="PRINTS" id="PR00622">
    <property type="entry name" value="HISTONEH3"/>
</dbReference>
<dbReference type="SMART" id="SM00428">
    <property type="entry name" value="H3"/>
    <property type="match status" value="1"/>
</dbReference>
<dbReference type="SUPFAM" id="SSF47113">
    <property type="entry name" value="Histone-fold"/>
    <property type="match status" value="1"/>
</dbReference>
<dbReference type="PROSITE" id="PS00322">
    <property type="entry name" value="HISTONE_H3_1"/>
    <property type="match status" value="1"/>
</dbReference>
<dbReference type="PROSITE" id="PS00959">
    <property type="entry name" value="HISTONE_H3_2"/>
    <property type="match status" value="1"/>
</dbReference>
<proteinExistence type="inferred from homology"/>
<reference key="1">
    <citation type="journal article" date="1999" name="FEMS Microbiol. Lett.">
        <title>Several highly divergent histone H3 genes are present in the hypotrichous ciliate Stylonychia lemnae.</title>
        <authorList>
            <person name="Bernhard D."/>
        </authorList>
    </citation>
    <scope>NUCLEOTIDE SEQUENCE [GENOMIC DNA]</scope>
</reference>